<dbReference type="EC" id="1.6.5.-" evidence="1"/>
<dbReference type="EC" id="1.7.1.17" evidence="1"/>
<dbReference type="EMBL" id="CP000312">
    <property type="protein sequence ID" value="ABG87852.1"/>
    <property type="molecule type" value="Genomic_DNA"/>
</dbReference>
<dbReference type="RefSeq" id="WP_011591839.1">
    <property type="nucleotide sequence ID" value="NC_008262.1"/>
</dbReference>
<dbReference type="SMR" id="Q0SUV5"/>
<dbReference type="KEGG" id="cpr:CPR_0777"/>
<dbReference type="Proteomes" id="UP000001824">
    <property type="component" value="Chromosome"/>
</dbReference>
<dbReference type="GO" id="GO:0009055">
    <property type="term" value="F:electron transfer activity"/>
    <property type="evidence" value="ECO:0007669"/>
    <property type="project" value="UniProtKB-UniRule"/>
</dbReference>
<dbReference type="GO" id="GO:0010181">
    <property type="term" value="F:FMN binding"/>
    <property type="evidence" value="ECO:0007669"/>
    <property type="project" value="UniProtKB-UniRule"/>
</dbReference>
<dbReference type="GO" id="GO:0016652">
    <property type="term" value="F:oxidoreductase activity, acting on NAD(P)H as acceptor"/>
    <property type="evidence" value="ECO:0007669"/>
    <property type="project" value="UniProtKB-UniRule"/>
</dbReference>
<dbReference type="GO" id="GO:0016655">
    <property type="term" value="F:oxidoreductase activity, acting on NAD(P)H, quinone or similar compound as acceptor"/>
    <property type="evidence" value="ECO:0007669"/>
    <property type="project" value="InterPro"/>
</dbReference>
<dbReference type="Gene3D" id="3.40.50.360">
    <property type="match status" value="1"/>
</dbReference>
<dbReference type="HAMAP" id="MF_01216">
    <property type="entry name" value="Azoreductase_type1"/>
    <property type="match status" value="1"/>
</dbReference>
<dbReference type="InterPro" id="IPR003680">
    <property type="entry name" value="Flavodoxin_fold"/>
</dbReference>
<dbReference type="InterPro" id="IPR029039">
    <property type="entry name" value="Flavoprotein-like_sf"/>
</dbReference>
<dbReference type="InterPro" id="IPR050104">
    <property type="entry name" value="FMN-dep_NADH:Q_OxRdtase_AzoR1"/>
</dbReference>
<dbReference type="InterPro" id="IPR023048">
    <property type="entry name" value="NADH:quinone_OxRdtase_FMN_depd"/>
</dbReference>
<dbReference type="PANTHER" id="PTHR43741">
    <property type="entry name" value="FMN-DEPENDENT NADH-AZOREDUCTASE 1"/>
    <property type="match status" value="1"/>
</dbReference>
<dbReference type="PANTHER" id="PTHR43741:SF7">
    <property type="entry name" value="FMN-DEPENDENT NADH:QUINONE OXIDOREDUCTASE"/>
    <property type="match status" value="1"/>
</dbReference>
<dbReference type="Pfam" id="PF02525">
    <property type="entry name" value="Flavodoxin_2"/>
    <property type="match status" value="1"/>
</dbReference>
<dbReference type="SUPFAM" id="SSF52218">
    <property type="entry name" value="Flavoproteins"/>
    <property type="match status" value="1"/>
</dbReference>
<keyword id="KW-0285">Flavoprotein</keyword>
<keyword id="KW-0288">FMN</keyword>
<keyword id="KW-0520">NAD</keyword>
<keyword id="KW-0560">Oxidoreductase</keyword>
<accession>Q0SUV5</accession>
<reference key="1">
    <citation type="journal article" date="2006" name="Genome Res.">
        <title>Skewed genomic variability in strains of the toxigenic bacterial pathogen, Clostridium perfringens.</title>
        <authorList>
            <person name="Myers G.S.A."/>
            <person name="Rasko D.A."/>
            <person name="Cheung J.K."/>
            <person name="Ravel J."/>
            <person name="Seshadri R."/>
            <person name="DeBoy R.T."/>
            <person name="Ren Q."/>
            <person name="Varga J."/>
            <person name="Awad M.M."/>
            <person name="Brinkac L.M."/>
            <person name="Daugherty S.C."/>
            <person name="Haft D.H."/>
            <person name="Dodson R.J."/>
            <person name="Madupu R."/>
            <person name="Nelson W.C."/>
            <person name="Rosovitz M.J."/>
            <person name="Sullivan S.A."/>
            <person name="Khouri H."/>
            <person name="Dimitrov G.I."/>
            <person name="Watkins K.L."/>
            <person name="Mulligan S."/>
            <person name="Benton J."/>
            <person name="Radune D."/>
            <person name="Fisher D.J."/>
            <person name="Atkins H.S."/>
            <person name="Hiscox T."/>
            <person name="Jost B.H."/>
            <person name="Billington S.J."/>
            <person name="Songer J.G."/>
            <person name="McClane B.A."/>
            <person name="Titball R.W."/>
            <person name="Rood J.I."/>
            <person name="Melville S.B."/>
            <person name="Paulsen I.T."/>
        </authorList>
    </citation>
    <scope>NUCLEOTIDE SEQUENCE [LARGE SCALE GENOMIC DNA]</scope>
    <source>
        <strain>SM101 / Type A</strain>
    </source>
</reference>
<sequence length="198" mass="22390">MSKVLYIKANIKNEGESRTFKVSDSFVEEYKKNNPEDQIITLDLYKENIDFLRADDLGKLFGPKDEESKNNSILKYAYQFADADKYIIAAPMWNLSFPAILKAYIDYVSVSGITFKYTAEGPVGLLNNKKAVHIVSRGGGYDNSPYEMGDRYLRTILGFFGIKDIETIDIDNLDVIGVNVKEKVKEGIEKAISLAKKF</sequence>
<protein>
    <recommendedName>
        <fullName evidence="1">FMN-dependent NADH:quinone oxidoreductase</fullName>
        <ecNumber evidence="1">1.6.5.-</ecNumber>
    </recommendedName>
    <alternativeName>
        <fullName evidence="1">Azo-dye reductase</fullName>
    </alternativeName>
    <alternativeName>
        <fullName evidence="1">FMN-dependent NADH-azo compound oxidoreductase</fullName>
    </alternativeName>
    <alternativeName>
        <fullName evidence="1">FMN-dependent NADH-azoreductase</fullName>
        <ecNumber evidence="1">1.7.1.17</ecNumber>
    </alternativeName>
</protein>
<name>AZOR_CLOPS</name>
<evidence type="ECO:0000255" key="1">
    <source>
        <dbReference type="HAMAP-Rule" id="MF_01216"/>
    </source>
</evidence>
<comment type="function">
    <text evidence="1">Quinone reductase that provides resistance to thiol-specific stress caused by electrophilic quinones.</text>
</comment>
<comment type="function">
    <text evidence="1">Also exhibits azoreductase activity. Catalyzes the reductive cleavage of the azo bond in aromatic azo compounds to the corresponding amines.</text>
</comment>
<comment type="catalytic activity">
    <reaction evidence="1">
        <text>2 a quinone + NADH + H(+) = 2 a 1,4-benzosemiquinone + NAD(+)</text>
        <dbReference type="Rhea" id="RHEA:65952"/>
        <dbReference type="ChEBI" id="CHEBI:15378"/>
        <dbReference type="ChEBI" id="CHEBI:57540"/>
        <dbReference type="ChEBI" id="CHEBI:57945"/>
        <dbReference type="ChEBI" id="CHEBI:132124"/>
        <dbReference type="ChEBI" id="CHEBI:134225"/>
    </reaction>
</comment>
<comment type="catalytic activity">
    <reaction evidence="1">
        <text>N,N-dimethyl-1,4-phenylenediamine + anthranilate + 2 NAD(+) = 2-(4-dimethylaminophenyl)diazenylbenzoate + 2 NADH + 2 H(+)</text>
        <dbReference type="Rhea" id="RHEA:55872"/>
        <dbReference type="ChEBI" id="CHEBI:15378"/>
        <dbReference type="ChEBI" id="CHEBI:15783"/>
        <dbReference type="ChEBI" id="CHEBI:16567"/>
        <dbReference type="ChEBI" id="CHEBI:57540"/>
        <dbReference type="ChEBI" id="CHEBI:57945"/>
        <dbReference type="ChEBI" id="CHEBI:71579"/>
        <dbReference type="EC" id="1.7.1.17"/>
    </reaction>
</comment>
<comment type="cofactor">
    <cofactor evidence="1">
        <name>FMN</name>
        <dbReference type="ChEBI" id="CHEBI:58210"/>
    </cofactor>
    <text evidence="1">Binds 1 FMN per subunit.</text>
</comment>
<comment type="subunit">
    <text evidence="1">Homodimer.</text>
</comment>
<comment type="similarity">
    <text evidence="1">Belongs to the azoreductase type 1 family.</text>
</comment>
<proteinExistence type="inferred from homology"/>
<feature type="chain" id="PRO_1000066501" description="FMN-dependent NADH:quinone oxidoreductase">
    <location>
        <begin position="1"/>
        <end position="198"/>
    </location>
</feature>
<feature type="binding site" evidence="1">
    <location>
        <begin position="92"/>
        <end position="95"/>
    </location>
    <ligand>
        <name>FMN</name>
        <dbReference type="ChEBI" id="CHEBI:58210"/>
    </ligand>
</feature>
<feature type="binding site" evidence="1">
    <location>
        <begin position="136"/>
        <end position="139"/>
    </location>
    <ligand>
        <name>FMN</name>
        <dbReference type="ChEBI" id="CHEBI:58210"/>
    </ligand>
</feature>
<gene>
    <name evidence="1" type="primary">azoR</name>
    <name type="ordered locus">CPR_0777</name>
</gene>
<organism>
    <name type="scientific">Clostridium perfringens (strain SM101 / Type A)</name>
    <dbReference type="NCBI Taxonomy" id="289380"/>
    <lineage>
        <taxon>Bacteria</taxon>
        <taxon>Bacillati</taxon>
        <taxon>Bacillota</taxon>
        <taxon>Clostridia</taxon>
        <taxon>Eubacteriales</taxon>
        <taxon>Clostridiaceae</taxon>
        <taxon>Clostridium</taxon>
    </lineage>
</organism>